<feature type="chain" id="PRO_0000069336" description="C-X-C chemokine receptor type 2">
    <location>
        <begin position="1" status="less than"/>
        <end position="353" status="greater than"/>
    </location>
</feature>
<feature type="topological domain" description="Extracellular" evidence="3">
    <location>
        <begin position="1" status="less than"/>
        <end position="45"/>
    </location>
</feature>
<feature type="transmembrane region" description="Helical; Name=1" evidence="3">
    <location>
        <begin position="46"/>
        <end position="72"/>
    </location>
</feature>
<feature type="topological domain" description="Cytoplasmic" evidence="3">
    <location>
        <begin position="73"/>
        <end position="81"/>
    </location>
</feature>
<feature type="transmembrane region" description="Helical; Name=2" evidence="3">
    <location>
        <begin position="82"/>
        <end position="102"/>
    </location>
</feature>
<feature type="topological domain" description="Extracellular" evidence="3">
    <location>
        <begin position="103"/>
        <end position="117"/>
    </location>
</feature>
<feature type="transmembrane region" description="Helical; Name=3" evidence="3">
    <location>
        <begin position="118"/>
        <end position="139"/>
    </location>
</feature>
<feature type="topological domain" description="Cytoplasmic" evidence="3">
    <location>
        <begin position="140"/>
        <end position="160"/>
    </location>
</feature>
<feature type="transmembrane region" description="Helical; Name=4" evidence="3">
    <location>
        <begin position="161"/>
        <end position="180"/>
    </location>
</feature>
<feature type="topological domain" description="Extracellular" evidence="3">
    <location>
        <begin position="181"/>
        <end position="205"/>
    </location>
</feature>
<feature type="transmembrane region" description="Helical; Name=5" evidence="3">
    <location>
        <begin position="206"/>
        <end position="228"/>
    </location>
</feature>
<feature type="topological domain" description="Cytoplasmic" evidence="3">
    <location>
        <begin position="229"/>
        <end position="248"/>
    </location>
</feature>
<feature type="transmembrane region" description="Helical; Name=6" evidence="3">
    <location>
        <begin position="249"/>
        <end position="270"/>
    </location>
</feature>
<feature type="topological domain" description="Extracellular" evidence="3">
    <location>
        <begin position="271"/>
        <end position="291"/>
    </location>
</feature>
<feature type="transmembrane region" description="Helical; Name=7" evidence="3">
    <location>
        <begin position="292"/>
        <end position="312"/>
    </location>
</feature>
<feature type="topological domain" description="Cytoplasmic" evidence="3">
    <location>
        <begin position="313"/>
        <end position="353" status="greater than"/>
    </location>
</feature>
<feature type="glycosylation site" description="N-linked (GlcNAc...) asparagine" evidence="3">
    <location>
        <position position="19"/>
    </location>
</feature>
<feature type="disulfide bond" evidence="4">
    <location>
        <begin position="116"/>
        <end position="193"/>
    </location>
</feature>
<feature type="non-terminal residue">
    <location>
        <position position="1"/>
    </location>
</feature>
<feature type="non-terminal residue">
    <location>
        <position position="353"/>
    </location>
</feature>
<reference key="1">
    <citation type="journal article" date="1996" name="Immunogenetics">
        <title>Characterization of interleukin-8 receptors in non-human primates.</title>
        <authorList>
            <person name="Alvarez V."/>
            <person name="Coto E."/>
            <person name="Setien F."/>
            <person name="Gonzalez S."/>
            <person name="Gonzalez-Roces S."/>
            <person name="Lopez-Larrea C."/>
        </authorList>
    </citation>
    <scope>NUCLEOTIDE SEQUENCE [GENOMIC DNA]</scope>
</reference>
<sequence>FNMESDSFEDFWKGEDLSNYSYSSALPPFLLDASPCEPESLEINKYFVVIIYALVFLLSLLGNSLVILVILYSRVGRSVTDVYLLNLALADLLFALTLPIWAASKVNGWIFGTFLCKVVSLLKEVNFYSGILLLACISVDRYLAIVHATRTLTQKRYLVKFICLSIWGLSLLLALPVLLFRRTIYPSNVSPVCYEDMGNNTANWRMLLRILPQSFGFIVPLLIMLFCYGFTLRTLFKAHMGQKHRAMRVIFAVVLIFLLCWLPYNLVLLADTLMRTQVIQETCERRNHINQALDATEILGILHSCLNPLIYAFIGQKFCHGLLKILAIHGLISKDSLPKDSRPSFVGSSSGHT</sequence>
<dbReference type="EMBL" id="X91114">
    <property type="protein sequence ID" value="CAA62564.1"/>
    <property type="molecule type" value="Genomic_DNA"/>
</dbReference>
<dbReference type="SMR" id="Q28422"/>
<dbReference type="STRING" id="9593.ENSGGOP00000008894"/>
<dbReference type="GlyCosmos" id="Q28422">
    <property type="glycosylation" value="1 site, No reported glycans"/>
</dbReference>
<dbReference type="eggNOG" id="KOG3656">
    <property type="taxonomic scope" value="Eukaryota"/>
</dbReference>
<dbReference type="InParanoid" id="Q28422"/>
<dbReference type="Proteomes" id="UP000001519">
    <property type="component" value="Unplaced"/>
</dbReference>
<dbReference type="GO" id="GO:0009897">
    <property type="term" value="C:external side of plasma membrane"/>
    <property type="evidence" value="ECO:0000318"/>
    <property type="project" value="GO_Central"/>
</dbReference>
<dbReference type="GO" id="GO:0019957">
    <property type="term" value="F:C-C chemokine binding"/>
    <property type="evidence" value="ECO:0000318"/>
    <property type="project" value="GO_Central"/>
</dbReference>
<dbReference type="GO" id="GO:0016493">
    <property type="term" value="F:C-C chemokine receptor activity"/>
    <property type="evidence" value="ECO:0000318"/>
    <property type="project" value="GO_Central"/>
</dbReference>
<dbReference type="GO" id="GO:0016494">
    <property type="term" value="F:C-X-C chemokine receptor activity"/>
    <property type="evidence" value="ECO:0007669"/>
    <property type="project" value="InterPro"/>
</dbReference>
<dbReference type="GO" id="GO:0019959">
    <property type="term" value="F:interleukin-8 binding"/>
    <property type="evidence" value="ECO:0007669"/>
    <property type="project" value="InterPro"/>
</dbReference>
<dbReference type="GO" id="GO:0019722">
    <property type="term" value="P:calcium-mediated signaling"/>
    <property type="evidence" value="ECO:0000318"/>
    <property type="project" value="GO_Central"/>
</dbReference>
<dbReference type="GO" id="GO:0006955">
    <property type="term" value="P:immune response"/>
    <property type="evidence" value="ECO:0000318"/>
    <property type="project" value="GO_Central"/>
</dbReference>
<dbReference type="GO" id="GO:0030593">
    <property type="term" value="P:neutrophil chemotaxis"/>
    <property type="evidence" value="ECO:0000318"/>
    <property type="project" value="GO_Central"/>
</dbReference>
<dbReference type="GO" id="GO:0007204">
    <property type="term" value="P:positive regulation of cytosolic calcium ion concentration"/>
    <property type="evidence" value="ECO:0000318"/>
    <property type="project" value="GO_Central"/>
</dbReference>
<dbReference type="CDD" id="cd15178">
    <property type="entry name" value="7tmA_CXCR1_2"/>
    <property type="match status" value="1"/>
</dbReference>
<dbReference type="FunFam" id="1.20.1070.10:FF:000157">
    <property type="entry name" value="C-X-C chemokine receptor type 2"/>
    <property type="match status" value="1"/>
</dbReference>
<dbReference type="Gene3D" id="1.20.1070.10">
    <property type="entry name" value="Rhodopsin 7-helix transmembrane proteins"/>
    <property type="match status" value="1"/>
</dbReference>
<dbReference type="InterPro" id="IPR050119">
    <property type="entry name" value="CCR1-9-like"/>
</dbReference>
<dbReference type="InterPro" id="IPR000057">
    <property type="entry name" value="Chemokine_CXCR2"/>
</dbReference>
<dbReference type="InterPro" id="IPR000174">
    <property type="entry name" value="Chemokine_CXCR_1/2"/>
</dbReference>
<dbReference type="InterPro" id="IPR000276">
    <property type="entry name" value="GPCR_Rhodpsn"/>
</dbReference>
<dbReference type="InterPro" id="IPR017452">
    <property type="entry name" value="GPCR_Rhodpsn_7TM"/>
</dbReference>
<dbReference type="PANTHER" id="PTHR10489:SF689">
    <property type="entry name" value="C-X-C CHEMOKINE RECEPTOR TYPE 2"/>
    <property type="match status" value="1"/>
</dbReference>
<dbReference type="PANTHER" id="PTHR10489">
    <property type="entry name" value="CELL ADHESION MOLECULE"/>
    <property type="match status" value="1"/>
</dbReference>
<dbReference type="Pfam" id="PF00001">
    <property type="entry name" value="7tm_1"/>
    <property type="match status" value="1"/>
</dbReference>
<dbReference type="PRINTS" id="PR00237">
    <property type="entry name" value="GPCRRHODOPSN"/>
</dbReference>
<dbReference type="PRINTS" id="PR00427">
    <property type="entry name" value="INTRLEUKIN8R"/>
</dbReference>
<dbReference type="PRINTS" id="PR00573">
    <property type="entry name" value="INTRLEUKN8BR"/>
</dbReference>
<dbReference type="SUPFAM" id="SSF81321">
    <property type="entry name" value="Family A G protein-coupled receptor-like"/>
    <property type="match status" value="1"/>
</dbReference>
<dbReference type="PROSITE" id="PS00237">
    <property type="entry name" value="G_PROTEIN_RECEP_F1_1"/>
    <property type="match status" value="1"/>
</dbReference>
<dbReference type="PROSITE" id="PS50262">
    <property type="entry name" value="G_PROTEIN_RECEP_F1_2"/>
    <property type="match status" value="1"/>
</dbReference>
<accession>Q28422</accession>
<name>CXCR2_GORGO</name>
<gene>
    <name type="primary">CXCR2</name>
    <name type="synonym">IL8RB</name>
</gene>
<protein>
    <recommendedName>
        <fullName>C-X-C chemokine receptor type 2</fullName>
        <shortName>CXC-R2</shortName>
        <shortName>CXCR-2</shortName>
    </recommendedName>
    <alternativeName>
        <fullName>High affinity interleukin-8 receptor B</fullName>
        <shortName>IL-8R B</shortName>
    </alternativeName>
    <cdAntigenName>CD182</cdAntigenName>
</protein>
<keyword id="KW-1003">Cell membrane</keyword>
<keyword id="KW-0145">Chemotaxis</keyword>
<keyword id="KW-1015">Disulfide bond</keyword>
<keyword id="KW-0297">G-protein coupled receptor</keyword>
<keyword id="KW-0325">Glycoprotein</keyword>
<keyword id="KW-0472">Membrane</keyword>
<keyword id="KW-0597">Phosphoprotein</keyword>
<keyword id="KW-0675">Receptor</keyword>
<keyword id="KW-1185">Reference proteome</keyword>
<keyword id="KW-0807">Transducer</keyword>
<keyword id="KW-0812">Transmembrane</keyword>
<keyword id="KW-1133">Transmembrane helix</keyword>
<organism>
    <name type="scientific">Gorilla gorilla gorilla</name>
    <name type="common">Western lowland gorilla</name>
    <dbReference type="NCBI Taxonomy" id="9595"/>
    <lineage>
        <taxon>Eukaryota</taxon>
        <taxon>Metazoa</taxon>
        <taxon>Chordata</taxon>
        <taxon>Craniata</taxon>
        <taxon>Vertebrata</taxon>
        <taxon>Euteleostomi</taxon>
        <taxon>Mammalia</taxon>
        <taxon>Eutheria</taxon>
        <taxon>Euarchontoglires</taxon>
        <taxon>Primates</taxon>
        <taxon>Haplorrhini</taxon>
        <taxon>Catarrhini</taxon>
        <taxon>Hominidae</taxon>
        <taxon>Gorilla</taxon>
    </lineage>
</organism>
<comment type="function">
    <text evidence="2">Receptor for interleukin-8 which is a powerful neutrophil chemotactic factor. Binding of IL-8 to the receptor causes activation of neutrophils. This response is mediated via a G-protein that activates a phosphatidylinositol-calcium second messenger system. Binds to IL-8 with high affinity. Also binds with high affinity to CXCL3, GRO/MGSA and NAP-2.</text>
</comment>
<comment type="subunit">
    <text evidence="2">Interacts with IL8. Interacts with GNAI2.</text>
</comment>
<comment type="subcellular location">
    <subcellularLocation>
        <location>Cell membrane</location>
        <topology>Multi-pass membrane protein</topology>
    </subcellularLocation>
</comment>
<comment type="PTM">
    <text evidence="1">Phosphorylated upon ligand binding; which is required for desensitization.</text>
</comment>
<comment type="similarity">
    <text evidence="4">Belongs to the G-protein coupled receptor 1 family.</text>
</comment>
<evidence type="ECO:0000250" key="1"/>
<evidence type="ECO:0000250" key="2">
    <source>
        <dbReference type="UniProtKB" id="P25025"/>
    </source>
</evidence>
<evidence type="ECO:0000255" key="3"/>
<evidence type="ECO:0000255" key="4">
    <source>
        <dbReference type="PROSITE-ProRule" id="PRU00521"/>
    </source>
</evidence>
<proteinExistence type="inferred from homology"/>